<gene>
    <name type="primary">PAP24</name>
    <name type="ordered locus">At4g24890</name>
    <name type="ORF">F13M23.30</name>
</gene>
<sequence>MARVLGVLLCLLALFSSSLCLDHANGRGDQALAQINVYETSLALDSSVKLHASPQVLGSQGEDTEWVNLAISNPKPTSDDWIGVFSPAKFDSGNCWPTSGGKEKTPYICSSPIKYMYCNSHPDYMKSGNVTLKFQIINQRADVSFALFSNGVQEPHLLGVSNPVAFFNPKAPVYPRLALGKNWDEMTVTWTSGYNIDEAVPFIEWSAKGLPARRSPAGTLTFNRNSMCGNPARGVGWRDPGFFHTSFLKELWPNREYIYRLGHDLVNGSTIWSKNYTFVSSPYPGQDSKQRVIIFGDMGKGERDGSNEYNDYQPGSLNTTDQVIKDLKDIDIVFHIGDLTYSNGYLSQWDQFTAQVQPIASTVPYMIASGNHERDWPDTGSFYAGTDSGGECGVPAETMFYFPAENRAKFWYKTDYGMFRFCVADSEHDWREGTEQYKFIENCLATVDRKTQPWLIFIAHRVLGYSTNDWYGKEGTFEEPMGRESLQKLWQKYKVDLAFYGHVHNYERTCPIYESQCVNNDKDHYSGTFKGTIHVVVGGAGSHLSPFSSLVPKWSLVRDYDFGFVKLTASDHSSLLFEYKKSSTGQVYDSFNISRDYRDVLACTHDSCEPTTSAG</sequence>
<proteinExistence type="evidence at transcript level"/>
<name>PPA24_ARATH</name>
<evidence type="ECO:0000250" key="1"/>
<evidence type="ECO:0000255" key="2"/>
<evidence type="ECO:0000269" key="3">
    <source>
    </source>
</evidence>
<evidence type="ECO:0000305" key="4"/>
<comment type="cofactor">
    <cofactor evidence="1">
        <name>Fe cation</name>
        <dbReference type="ChEBI" id="CHEBI:24875"/>
    </cofactor>
    <text evidence="1">Binds 1 Fe cation per subunit.</text>
</comment>
<comment type="cofactor">
    <cofactor evidence="1">
        <name>Zn(2+)</name>
        <dbReference type="ChEBI" id="CHEBI:29105"/>
    </cofactor>
    <text evidence="1">Binds 1 zinc ion per subunit.</text>
</comment>
<comment type="subunit">
    <text evidence="1">Homodimer.</text>
</comment>
<comment type="subcellular location">
    <subcellularLocation>
        <location evidence="1">Secreted</location>
    </subcellularLocation>
</comment>
<comment type="tissue specificity">
    <text evidence="3">Specifically expressed in flowers.</text>
</comment>
<comment type="similarity">
    <text evidence="4">Belongs to the metallophosphoesterase superfamily. Purple acid phosphatase family.</text>
</comment>
<comment type="caution">
    <text evidence="4">Lacks the conserved His residue essential for phosphatase activity. Its enzyme activity is therefore unsure.</text>
</comment>
<comment type="sequence caution" evidence="4">
    <conflict type="erroneous gene model prediction">
        <sequence resource="EMBL-CDS" id="CAB36731"/>
    </conflict>
</comment>
<comment type="sequence caution" evidence="4">
    <conflict type="erroneous gene model prediction">
        <sequence resource="EMBL-CDS" id="CAB79398"/>
    </conflict>
</comment>
<dbReference type="EMBL" id="AY842025">
    <property type="protein sequence ID" value="AAW29949.1"/>
    <property type="molecule type" value="mRNA"/>
</dbReference>
<dbReference type="EMBL" id="AL035523">
    <property type="protein sequence ID" value="CAB36731.1"/>
    <property type="status" value="ALT_SEQ"/>
    <property type="molecule type" value="Genomic_DNA"/>
</dbReference>
<dbReference type="EMBL" id="AL161562">
    <property type="protein sequence ID" value="CAB79398.1"/>
    <property type="status" value="ALT_SEQ"/>
    <property type="molecule type" value="Genomic_DNA"/>
</dbReference>
<dbReference type="EMBL" id="CP002687">
    <property type="protein sequence ID" value="AEE84973.1"/>
    <property type="molecule type" value="Genomic_DNA"/>
</dbReference>
<dbReference type="EMBL" id="AY142520">
    <property type="protein sequence ID" value="AAN13063.1"/>
    <property type="molecule type" value="mRNA"/>
</dbReference>
<dbReference type="PIR" id="T05510">
    <property type="entry name" value="T05510"/>
</dbReference>
<dbReference type="RefSeq" id="NP_194219.2">
    <property type="nucleotide sequence ID" value="NM_118621.4"/>
</dbReference>
<dbReference type="SMR" id="Q8H1R2"/>
<dbReference type="STRING" id="3702.Q8H1R2"/>
<dbReference type="GlyCosmos" id="Q8H1R2">
    <property type="glycosylation" value="5 sites, No reported glycans"/>
</dbReference>
<dbReference type="GlyGen" id="Q8H1R2">
    <property type="glycosylation" value="5 sites"/>
</dbReference>
<dbReference type="PaxDb" id="3702-AT4G24890.1"/>
<dbReference type="ProteomicsDB" id="249025"/>
<dbReference type="EnsemblPlants" id="AT4G24890.1">
    <property type="protein sequence ID" value="AT4G24890.1"/>
    <property type="gene ID" value="AT4G24890"/>
</dbReference>
<dbReference type="GeneID" id="828591"/>
<dbReference type="Gramene" id="AT4G24890.1">
    <property type="protein sequence ID" value="AT4G24890.1"/>
    <property type="gene ID" value="AT4G24890"/>
</dbReference>
<dbReference type="KEGG" id="ath:AT4G24890"/>
<dbReference type="Araport" id="AT4G24890"/>
<dbReference type="TAIR" id="AT4G24890">
    <property type="gene designation" value="PAP24"/>
</dbReference>
<dbReference type="eggNOG" id="KOG1378">
    <property type="taxonomic scope" value="Eukaryota"/>
</dbReference>
<dbReference type="HOGENOM" id="CLU_013387_4_1_1"/>
<dbReference type="InParanoid" id="Q8H1R2"/>
<dbReference type="OMA" id="FHAYERT"/>
<dbReference type="PhylomeDB" id="Q8H1R2"/>
<dbReference type="PRO" id="PR:Q8H1R2"/>
<dbReference type="Proteomes" id="UP000006548">
    <property type="component" value="Chromosome 4"/>
</dbReference>
<dbReference type="ExpressionAtlas" id="Q8H1R2">
    <property type="expression patterns" value="baseline and differential"/>
</dbReference>
<dbReference type="GO" id="GO:0005576">
    <property type="term" value="C:extracellular region"/>
    <property type="evidence" value="ECO:0007669"/>
    <property type="project" value="UniProtKB-SubCell"/>
</dbReference>
<dbReference type="GO" id="GO:0003993">
    <property type="term" value="F:acid phosphatase activity"/>
    <property type="evidence" value="ECO:0000250"/>
    <property type="project" value="TAIR"/>
</dbReference>
<dbReference type="GO" id="GO:0046872">
    <property type="term" value="F:metal ion binding"/>
    <property type="evidence" value="ECO:0007669"/>
    <property type="project" value="UniProtKB-KW"/>
</dbReference>
<dbReference type="CDD" id="cd00839">
    <property type="entry name" value="MPP_PAPs"/>
    <property type="match status" value="1"/>
</dbReference>
<dbReference type="Gene3D" id="3.60.21.10">
    <property type="match status" value="1"/>
</dbReference>
<dbReference type="Gene3D" id="2.60.40.380">
    <property type="entry name" value="Purple acid phosphatase-like, N-terminal"/>
    <property type="match status" value="1"/>
</dbReference>
<dbReference type="InterPro" id="IPR004843">
    <property type="entry name" value="Calcineurin-like_PHP_ApaH"/>
</dbReference>
<dbReference type="InterPro" id="IPR040974">
    <property type="entry name" value="Fn3_PAP"/>
</dbReference>
<dbReference type="InterPro" id="IPR029052">
    <property type="entry name" value="Metallo-depent_PP-like"/>
</dbReference>
<dbReference type="InterPro" id="IPR041792">
    <property type="entry name" value="MPP_PAP"/>
</dbReference>
<dbReference type="InterPro" id="IPR008963">
    <property type="entry name" value="Purple_acid_Pase-like_N"/>
</dbReference>
<dbReference type="InterPro" id="IPR015914">
    <property type="entry name" value="Purple_acid_Pase_N"/>
</dbReference>
<dbReference type="InterPro" id="IPR025733">
    <property type="entry name" value="Purple_acid_PPase_C_dom"/>
</dbReference>
<dbReference type="PANTHER" id="PTHR45778:SF6">
    <property type="entry name" value="INACTIVE PURPLE ACID PHOSPHATASE 24-RELATED"/>
    <property type="match status" value="1"/>
</dbReference>
<dbReference type="PANTHER" id="PTHR45778">
    <property type="entry name" value="PURPLE ACID PHOSPHATASE-RELATED"/>
    <property type="match status" value="1"/>
</dbReference>
<dbReference type="Pfam" id="PF17808">
    <property type="entry name" value="fn3_PAP"/>
    <property type="match status" value="1"/>
</dbReference>
<dbReference type="Pfam" id="PF00149">
    <property type="entry name" value="Metallophos"/>
    <property type="match status" value="1"/>
</dbReference>
<dbReference type="Pfam" id="PF14008">
    <property type="entry name" value="Metallophos_C"/>
    <property type="match status" value="1"/>
</dbReference>
<dbReference type="Pfam" id="PF16656">
    <property type="entry name" value="Pur_ac_phosph_N"/>
    <property type="match status" value="1"/>
</dbReference>
<dbReference type="SUPFAM" id="SSF56300">
    <property type="entry name" value="Metallo-dependent phosphatases"/>
    <property type="match status" value="1"/>
</dbReference>
<dbReference type="SUPFAM" id="SSF49363">
    <property type="entry name" value="Purple acid phosphatase, N-terminal domain"/>
    <property type="match status" value="1"/>
</dbReference>
<organism>
    <name type="scientific">Arabidopsis thaliana</name>
    <name type="common">Mouse-ear cress</name>
    <dbReference type="NCBI Taxonomy" id="3702"/>
    <lineage>
        <taxon>Eukaryota</taxon>
        <taxon>Viridiplantae</taxon>
        <taxon>Streptophyta</taxon>
        <taxon>Embryophyta</taxon>
        <taxon>Tracheophyta</taxon>
        <taxon>Spermatophyta</taxon>
        <taxon>Magnoliopsida</taxon>
        <taxon>eudicotyledons</taxon>
        <taxon>Gunneridae</taxon>
        <taxon>Pentapetalae</taxon>
        <taxon>rosids</taxon>
        <taxon>malvids</taxon>
        <taxon>Brassicales</taxon>
        <taxon>Brassicaceae</taxon>
        <taxon>Camelineae</taxon>
        <taxon>Arabidopsis</taxon>
    </lineage>
</organism>
<feature type="signal peptide" evidence="2">
    <location>
        <begin position="1"/>
        <end position="26"/>
    </location>
</feature>
<feature type="chain" id="PRO_0000372827" description="Probable inactive purple acid phosphatase 24">
    <location>
        <begin position="27"/>
        <end position="615"/>
    </location>
</feature>
<feature type="binding site" evidence="1">
    <location>
        <position position="297"/>
    </location>
    <ligand>
        <name>Fe cation</name>
        <dbReference type="ChEBI" id="CHEBI:24875"/>
    </ligand>
</feature>
<feature type="binding site" evidence="1">
    <location>
        <position position="338"/>
    </location>
    <ligand>
        <name>Fe cation</name>
        <dbReference type="ChEBI" id="CHEBI:24875"/>
    </ligand>
</feature>
<feature type="binding site" evidence="1">
    <location>
        <position position="338"/>
    </location>
    <ligand>
        <name>Zn(2+)</name>
        <dbReference type="ChEBI" id="CHEBI:29105"/>
    </ligand>
</feature>
<feature type="binding site" evidence="1">
    <location>
        <position position="341"/>
    </location>
    <ligand>
        <name>Fe cation</name>
        <dbReference type="ChEBI" id="CHEBI:24875"/>
    </ligand>
</feature>
<feature type="binding site" evidence="1">
    <location>
        <position position="371"/>
    </location>
    <ligand>
        <name>substrate</name>
    </ligand>
</feature>
<feature type="binding site" evidence="1">
    <location>
        <position position="371"/>
    </location>
    <ligand>
        <name>Zn(2+)</name>
        <dbReference type="ChEBI" id="CHEBI:29105"/>
    </ligand>
</feature>
<feature type="binding site" evidence="1">
    <location>
        <position position="460"/>
    </location>
    <ligand>
        <name>Zn(2+)</name>
        <dbReference type="ChEBI" id="CHEBI:29105"/>
    </ligand>
</feature>
<feature type="binding site" evidence="1">
    <location>
        <begin position="502"/>
        <end position="504"/>
    </location>
    <ligand>
        <name>substrate</name>
    </ligand>
</feature>
<feature type="binding site" evidence="1">
    <location>
        <position position="502"/>
    </location>
    <ligand>
        <name>Zn(2+)</name>
        <dbReference type="ChEBI" id="CHEBI:29105"/>
    </ligand>
</feature>
<feature type="binding site" evidence="1">
    <location>
        <position position="504"/>
    </location>
    <ligand>
        <name>Fe cation</name>
        <dbReference type="ChEBI" id="CHEBI:24875"/>
    </ligand>
</feature>
<feature type="glycosylation site" description="N-linked (GlcNAc...) asparagine" evidence="2">
    <location>
        <position position="129"/>
    </location>
</feature>
<feature type="glycosylation site" description="N-linked (GlcNAc...) asparagine" evidence="2">
    <location>
        <position position="267"/>
    </location>
</feature>
<feature type="glycosylation site" description="N-linked (GlcNAc...) asparagine" evidence="2">
    <location>
        <position position="275"/>
    </location>
</feature>
<feature type="glycosylation site" description="N-linked (GlcNAc...) asparagine" evidence="2">
    <location>
        <position position="318"/>
    </location>
</feature>
<feature type="glycosylation site" description="N-linked (GlcNAc...) asparagine" evidence="2">
    <location>
        <position position="592"/>
    </location>
</feature>
<feature type="sequence conflict" description="In Ref. 1; AAW29949." evidence="4" ref="1">
    <original>K</original>
    <variation>N</variation>
    <location>
        <position position="89"/>
    </location>
</feature>
<feature type="sequence conflict" description="In Ref. 1; AAW29949." evidence="4" ref="1">
    <original>T</original>
    <variation>I</variation>
    <location>
        <position position="604"/>
    </location>
</feature>
<protein>
    <recommendedName>
        <fullName>Probable inactive purple acid phosphatase 24</fullName>
    </recommendedName>
</protein>
<keyword id="KW-0325">Glycoprotein</keyword>
<keyword id="KW-0408">Iron</keyword>
<keyword id="KW-0479">Metal-binding</keyword>
<keyword id="KW-1185">Reference proteome</keyword>
<keyword id="KW-0964">Secreted</keyword>
<keyword id="KW-0732">Signal</keyword>
<keyword id="KW-0862">Zinc</keyword>
<accession>Q8H1R2</accession>
<accession>Q5MAV0</accession>
<accession>Q9SW37</accession>
<reference key="1">
    <citation type="journal article" date="2005" name="Plant Mol. Biol.">
        <title>Expression patterns of purple acid phosphatase genes in Arabidopsis organs and functional analysis of AtPAP23 predominantly transcribed in flower.</title>
        <authorList>
            <person name="Zhu H."/>
            <person name="Qian W."/>
            <person name="Lu X."/>
            <person name="Li D."/>
            <person name="Liu X."/>
            <person name="Liu K."/>
            <person name="Wang D."/>
        </authorList>
    </citation>
    <scope>NUCLEOTIDE SEQUENCE [MRNA]</scope>
    <scope>TISSUE SPECIFICITY</scope>
    <source>
        <strain>cv. Columbia</strain>
    </source>
</reference>
<reference key="2">
    <citation type="journal article" date="1999" name="Nature">
        <title>Sequence and analysis of chromosome 4 of the plant Arabidopsis thaliana.</title>
        <authorList>
            <person name="Mayer K.F.X."/>
            <person name="Schueller C."/>
            <person name="Wambutt R."/>
            <person name="Murphy G."/>
            <person name="Volckaert G."/>
            <person name="Pohl T."/>
            <person name="Duesterhoeft A."/>
            <person name="Stiekema W."/>
            <person name="Entian K.-D."/>
            <person name="Terryn N."/>
            <person name="Harris B."/>
            <person name="Ansorge W."/>
            <person name="Brandt P."/>
            <person name="Grivell L.A."/>
            <person name="Rieger M."/>
            <person name="Weichselgartner M."/>
            <person name="de Simone V."/>
            <person name="Obermaier B."/>
            <person name="Mache R."/>
            <person name="Mueller M."/>
            <person name="Kreis M."/>
            <person name="Delseny M."/>
            <person name="Puigdomenech P."/>
            <person name="Watson M."/>
            <person name="Schmidtheini T."/>
            <person name="Reichert B."/>
            <person name="Portetelle D."/>
            <person name="Perez-Alonso M."/>
            <person name="Boutry M."/>
            <person name="Bancroft I."/>
            <person name="Vos P."/>
            <person name="Hoheisel J."/>
            <person name="Zimmermann W."/>
            <person name="Wedler H."/>
            <person name="Ridley P."/>
            <person name="Langham S.-A."/>
            <person name="McCullagh B."/>
            <person name="Bilham L."/>
            <person name="Robben J."/>
            <person name="van der Schueren J."/>
            <person name="Grymonprez B."/>
            <person name="Chuang Y.-J."/>
            <person name="Vandenbussche F."/>
            <person name="Braeken M."/>
            <person name="Weltjens I."/>
            <person name="Voet M."/>
            <person name="Bastiaens I."/>
            <person name="Aert R."/>
            <person name="Defoor E."/>
            <person name="Weitzenegger T."/>
            <person name="Bothe G."/>
            <person name="Ramsperger U."/>
            <person name="Hilbert H."/>
            <person name="Braun M."/>
            <person name="Holzer E."/>
            <person name="Brandt A."/>
            <person name="Peters S."/>
            <person name="van Staveren M."/>
            <person name="Dirkse W."/>
            <person name="Mooijman P."/>
            <person name="Klein Lankhorst R."/>
            <person name="Rose M."/>
            <person name="Hauf J."/>
            <person name="Koetter P."/>
            <person name="Berneiser S."/>
            <person name="Hempel S."/>
            <person name="Feldpausch M."/>
            <person name="Lamberth S."/>
            <person name="Van den Daele H."/>
            <person name="De Keyser A."/>
            <person name="Buysshaert C."/>
            <person name="Gielen J."/>
            <person name="Villarroel R."/>
            <person name="De Clercq R."/>
            <person name="van Montagu M."/>
            <person name="Rogers J."/>
            <person name="Cronin A."/>
            <person name="Quail M.A."/>
            <person name="Bray-Allen S."/>
            <person name="Clark L."/>
            <person name="Doggett J."/>
            <person name="Hall S."/>
            <person name="Kay M."/>
            <person name="Lennard N."/>
            <person name="McLay K."/>
            <person name="Mayes R."/>
            <person name="Pettett A."/>
            <person name="Rajandream M.A."/>
            <person name="Lyne M."/>
            <person name="Benes V."/>
            <person name="Rechmann S."/>
            <person name="Borkova D."/>
            <person name="Bloecker H."/>
            <person name="Scharfe M."/>
            <person name="Grimm M."/>
            <person name="Loehnert T.-H."/>
            <person name="Dose S."/>
            <person name="de Haan M."/>
            <person name="Maarse A.C."/>
            <person name="Schaefer M."/>
            <person name="Mueller-Auer S."/>
            <person name="Gabel C."/>
            <person name="Fuchs M."/>
            <person name="Fartmann B."/>
            <person name="Granderath K."/>
            <person name="Dauner D."/>
            <person name="Herzl A."/>
            <person name="Neumann S."/>
            <person name="Argiriou A."/>
            <person name="Vitale D."/>
            <person name="Liguori R."/>
            <person name="Piravandi E."/>
            <person name="Massenet O."/>
            <person name="Quigley F."/>
            <person name="Clabauld G."/>
            <person name="Muendlein A."/>
            <person name="Felber R."/>
            <person name="Schnabl S."/>
            <person name="Hiller R."/>
            <person name="Schmidt W."/>
            <person name="Lecharny A."/>
            <person name="Aubourg S."/>
            <person name="Chefdor F."/>
            <person name="Cooke R."/>
            <person name="Berger C."/>
            <person name="Monfort A."/>
            <person name="Casacuberta E."/>
            <person name="Gibbons T."/>
            <person name="Weber N."/>
            <person name="Vandenbol M."/>
            <person name="Bargues M."/>
            <person name="Terol J."/>
            <person name="Torres A."/>
            <person name="Perez-Perez A."/>
            <person name="Purnelle B."/>
            <person name="Bent E."/>
            <person name="Johnson S."/>
            <person name="Tacon D."/>
            <person name="Jesse T."/>
            <person name="Heijnen L."/>
            <person name="Schwarz S."/>
            <person name="Scholler P."/>
            <person name="Heber S."/>
            <person name="Francs P."/>
            <person name="Bielke C."/>
            <person name="Frishman D."/>
            <person name="Haase D."/>
            <person name="Lemcke K."/>
            <person name="Mewes H.-W."/>
            <person name="Stocker S."/>
            <person name="Zaccaria P."/>
            <person name="Bevan M."/>
            <person name="Wilson R.K."/>
            <person name="de la Bastide M."/>
            <person name="Habermann K."/>
            <person name="Parnell L."/>
            <person name="Dedhia N."/>
            <person name="Gnoj L."/>
            <person name="Schutz K."/>
            <person name="Huang E."/>
            <person name="Spiegel L."/>
            <person name="Sekhon M."/>
            <person name="Murray J."/>
            <person name="Sheet P."/>
            <person name="Cordes M."/>
            <person name="Abu-Threideh J."/>
            <person name="Stoneking T."/>
            <person name="Kalicki J."/>
            <person name="Graves T."/>
            <person name="Harmon G."/>
            <person name="Edwards J."/>
            <person name="Latreille P."/>
            <person name="Courtney L."/>
            <person name="Cloud J."/>
            <person name="Abbott A."/>
            <person name="Scott K."/>
            <person name="Johnson D."/>
            <person name="Minx P."/>
            <person name="Bentley D."/>
            <person name="Fulton B."/>
            <person name="Miller N."/>
            <person name="Greco T."/>
            <person name="Kemp K."/>
            <person name="Kramer J."/>
            <person name="Fulton L."/>
            <person name="Mardis E."/>
            <person name="Dante M."/>
            <person name="Pepin K."/>
            <person name="Hillier L.W."/>
            <person name="Nelson J."/>
            <person name="Spieth J."/>
            <person name="Ryan E."/>
            <person name="Andrews S."/>
            <person name="Geisel C."/>
            <person name="Layman D."/>
            <person name="Du H."/>
            <person name="Ali J."/>
            <person name="Berghoff A."/>
            <person name="Jones K."/>
            <person name="Drone K."/>
            <person name="Cotton M."/>
            <person name="Joshu C."/>
            <person name="Antonoiu B."/>
            <person name="Zidanic M."/>
            <person name="Strong C."/>
            <person name="Sun H."/>
            <person name="Lamar B."/>
            <person name="Yordan C."/>
            <person name="Ma P."/>
            <person name="Zhong J."/>
            <person name="Preston R."/>
            <person name="Vil D."/>
            <person name="Shekher M."/>
            <person name="Matero A."/>
            <person name="Shah R."/>
            <person name="Swaby I.K."/>
            <person name="O'Shaughnessy A."/>
            <person name="Rodriguez M."/>
            <person name="Hoffman J."/>
            <person name="Till S."/>
            <person name="Granat S."/>
            <person name="Shohdy N."/>
            <person name="Hasegawa A."/>
            <person name="Hameed A."/>
            <person name="Lodhi M."/>
            <person name="Johnson A."/>
            <person name="Chen E."/>
            <person name="Marra M.A."/>
            <person name="Martienssen R."/>
            <person name="McCombie W.R."/>
        </authorList>
    </citation>
    <scope>NUCLEOTIDE SEQUENCE [LARGE SCALE GENOMIC DNA]</scope>
    <source>
        <strain>cv. Columbia</strain>
    </source>
</reference>
<reference key="3">
    <citation type="journal article" date="2017" name="Plant J.">
        <title>Araport11: a complete reannotation of the Arabidopsis thaliana reference genome.</title>
        <authorList>
            <person name="Cheng C.Y."/>
            <person name="Krishnakumar V."/>
            <person name="Chan A.P."/>
            <person name="Thibaud-Nissen F."/>
            <person name="Schobel S."/>
            <person name="Town C.D."/>
        </authorList>
    </citation>
    <scope>GENOME REANNOTATION</scope>
    <source>
        <strain>cv. Columbia</strain>
    </source>
</reference>
<reference key="4">
    <citation type="journal article" date="2003" name="Science">
        <title>Empirical analysis of transcriptional activity in the Arabidopsis genome.</title>
        <authorList>
            <person name="Yamada K."/>
            <person name="Lim J."/>
            <person name="Dale J.M."/>
            <person name="Chen H."/>
            <person name="Shinn P."/>
            <person name="Palm C.J."/>
            <person name="Southwick A.M."/>
            <person name="Wu H.C."/>
            <person name="Kim C.J."/>
            <person name="Nguyen M."/>
            <person name="Pham P.K."/>
            <person name="Cheuk R.F."/>
            <person name="Karlin-Newmann G."/>
            <person name="Liu S.X."/>
            <person name="Lam B."/>
            <person name="Sakano H."/>
            <person name="Wu T."/>
            <person name="Yu G."/>
            <person name="Miranda M."/>
            <person name="Quach H.L."/>
            <person name="Tripp M."/>
            <person name="Chang C.H."/>
            <person name="Lee J.M."/>
            <person name="Toriumi M.J."/>
            <person name="Chan M.M."/>
            <person name="Tang C.C."/>
            <person name="Onodera C.S."/>
            <person name="Deng J.M."/>
            <person name="Akiyama K."/>
            <person name="Ansari Y."/>
            <person name="Arakawa T."/>
            <person name="Banh J."/>
            <person name="Banno F."/>
            <person name="Bowser L."/>
            <person name="Brooks S.Y."/>
            <person name="Carninci P."/>
            <person name="Chao Q."/>
            <person name="Choy N."/>
            <person name="Enju A."/>
            <person name="Goldsmith A.D."/>
            <person name="Gurjal M."/>
            <person name="Hansen N.F."/>
            <person name="Hayashizaki Y."/>
            <person name="Johnson-Hopson C."/>
            <person name="Hsuan V.W."/>
            <person name="Iida K."/>
            <person name="Karnes M."/>
            <person name="Khan S."/>
            <person name="Koesema E."/>
            <person name="Ishida J."/>
            <person name="Jiang P.X."/>
            <person name="Jones T."/>
            <person name="Kawai J."/>
            <person name="Kamiya A."/>
            <person name="Meyers C."/>
            <person name="Nakajima M."/>
            <person name="Narusaka M."/>
            <person name="Seki M."/>
            <person name="Sakurai T."/>
            <person name="Satou M."/>
            <person name="Tamse R."/>
            <person name="Vaysberg M."/>
            <person name="Wallender E.K."/>
            <person name="Wong C."/>
            <person name="Yamamura Y."/>
            <person name="Yuan S."/>
            <person name="Shinozaki K."/>
            <person name="Davis R.W."/>
            <person name="Theologis A."/>
            <person name="Ecker J.R."/>
        </authorList>
    </citation>
    <scope>NUCLEOTIDE SEQUENCE [LARGE SCALE MRNA]</scope>
    <source>
        <strain>cv. Columbia</strain>
    </source>
</reference>
<reference key="5">
    <citation type="journal article" date="2002" name="J. Biol. Chem.">
        <title>Purple acid phosphatases of Arabidopsis thaliana. Comparative analysis and differential regulation by phosphate deprivation.</title>
        <authorList>
            <person name="Li D."/>
            <person name="Zhu H."/>
            <person name="Liu K."/>
            <person name="Liu X."/>
            <person name="Leggewie G."/>
            <person name="Udvardi M."/>
            <person name="Wang D."/>
        </authorList>
    </citation>
    <scope>GENE FAMILY</scope>
    <scope>NOMENCLATURE</scope>
</reference>